<sequence>MSNRVVIIGRPNVGKSTLFNRIIGKRYAIVEDYPGVTRDKIEAKAEWAGKEFIIVDTGGLVPETKDELIREVKKVVEQEIPKADVILFVVDGKEGLNPLDQEIAKYLYPYADKVLLVVNKIDNLRQEKNVAEFYTLGFEKIFPISAQHGKGVGELLDEVVKYLKEEKVETVEEGIKVAFIGRPNVGKSSLVNAILKDERVIVSPIAGTTRDAIEIPFRWKDKNFILIDTAGVRRPSNVEYGIEFYSVGRSLKAIDLADVCCLVIDASEGPTRQDKRLGGLIERRYKGCVIVANKMDISPWSEEELEGIIRKELFFLDFAPIVFTVATKGKGVEELLNWIDVVYKDYTKQHKTSFVNRAVHKILSEKPPPRYRGKEVKVYYAFQESTKPPTIVLITNYPDAWKENYKRFFIKKLREYLNIKYAPIKLVIKGRED</sequence>
<dbReference type="EMBL" id="AE000657">
    <property type="protein sequence ID" value="AAC07715.1"/>
    <property type="molecule type" value="Genomic_DNA"/>
</dbReference>
<dbReference type="PIR" id="A70465">
    <property type="entry name" value="A70465"/>
</dbReference>
<dbReference type="RefSeq" id="NP_214317.1">
    <property type="nucleotide sequence ID" value="NC_000918.1"/>
</dbReference>
<dbReference type="RefSeq" id="WP_010881253.1">
    <property type="nucleotide sequence ID" value="NC_000918.1"/>
</dbReference>
<dbReference type="SMR" id="O67749"/>
<dbReference type="FunCoup" id="O67749">
    <property type="interactions" value="435"/>
</dbReference>
<dbReference type="STRING" id="224324.aq_1919"/>
<dbReference type="EnsemblBacteria" id="AAC07715">
    <property type="protein sequence ID" value="AAC07715"/>
    <property type="gene ID" value="aq_1919"/>
</dbReference>
<dbReference type="KEGG" id="aae:aq_1919"/>
<dbReference type="PATRIC" id="fig|224324.8.peg.1486"/>
<dbReference type="eggNOG" id="COG1160">
    <property type="taxonomic scope" value="Bacteria"/>
</dbReference>
<dbReference type="HOGENOM" id="CLU_016077_6_2_0"/>
<dbReference type="InParanoid" id="O67749"/>
<dbReference type="OrthoDB" id="9805918at2"/>
<dbReference type="Proteomes" id="UP000000798">
    <property type="component" value="Chromosome"/>
</dbReference>
<dbReference type="GO" id="GO:0005525">
    <property type="term" value="F:GTP binding"/>
    <property type="evidence" value="ECO:0007669"/>
    <property type="project" value="UniProtKB-UniRule"/>
</dbReference>
<dbReference type="GO" id="GO:0043022">
    <property type="term" value="F:ribosome binding"/>
    <property type="evidence" value="ECO:0000318"/>
    <property type="project" value="GO_Central"/>
</dbReference>
<dbReference type="GO" id="GO:0042254">
    <property type="term" value="P:ribosome biogenesis"/>
    <property type="evidence" value="ECO:0007669"/>
    <property type="project" value="UniProtKB-KW"/>
</dbReference>
<dbReference type="CDD" id="cd01894">
    <property type="entry name" value="EngA1"/>
    <property type="match status" value="1"/>
</dbReference>
<dbReference type="CDD" id="cd01895">
    <property type="entry name" value="EngA2"/>
    <property type="match status" value="1"/>
</dbReference>
<dbReference type="FunFam" id="3.30.300.20:FF:000004">
    <property type="entry name" value="GTPase Der"/>
    <property type="match status" value="1"/>
</dbReference>
<dbReference type="FunFam" id="3.40.50.300:FF:000040">
    <property type="entry name" value="GTPase Der"/>
    <property type="match status" value="1"/>
</dbReference>
<dbReference type="FunFam" id="3.40.50.300:FF:000057">
    <property type="entry name" value="GTPase Der"/>
    <property type="match status" value="1"/>
</dbReference>
<dbReference type="Gene3D" id="3.30.300.20">
    <property type="match status" value="1"/>
</dbReference>
<dbReference type="Gene3D" id="3.40.50.300">
    <property type="entry name" value="P-loop containing nucleotide triphosphate hydrolases"/>
    <property type="match status" value="2"/>
</dbReference>
<dbReference type="HAMAP" id="MF_00195">
    <property type="entry name" value="GTPase_Der"/>
    <property type="match status" value="1"/>
</dbReference>
<dbReference type="InterPro" id="IPR031166">
    <property type="entry name" value="G_ENGA"/>
</dbReference>
<dbReference type="InterPro" id="IPR006073">
    <property type="entry name" value="GTP-bd"/>
</dbReference>
<dbReference type="InterPro" id="IPR016484">
    <property type="entry name" value="GTPase_Der"/>
</dbReference>
<dbReference type="InterPro" id="IPR032859">
    <property type="entry name" value="KH_dom-like"/>
</dbReference>
<dbReference type="InterPro" id="IPR015946">
    <property type="entry name" value="KH_dom-like_a/b"/>
</dbReference>
<dbReference type="InterPro" id="IPR027417">
    <property type="entry name" value="P-loop_NTPase"/>
</dbReference>
<dbReference type="InterPro" id="IPR005225">
    <property type="entry name" value="Small_GTP-bd"/>
</dbReference>
<dbReference type="NCBIfam" id="TIGR03594">
    <property type="entry name" value="GTPase_EngA"/>
    <property type="match status" value="1"/>
</dbReference>
<dbReference type="NCBIfam" id="TIGR00231">
    <property type="entry name" value="small_GTP"/>
    <property type="match status" value="2"/>
</dbReference>
<dbReference type="PANTHER" id="PTHR43834">
    <property type="entry name" value="GTPASE DER"/>
    <property type="match status" value="1"/>
</dbReference>
<dbReference type="PANTHER" id="PTHR43834:SF6">
    <property type="entry name" value="GTPASE DER"/>
    <property type="match status" value="1"/>
</dbReference>
<dbReference type="Pfam" id="PF14714">
    <property type="entry name" value="KH_dom-like"/>
    <property type="match status" value="1"/>
</dbReference>
<dbReference type="Pfam" id="PF01926">
    <property type="entry name" value="MMR_HSR1"/>
    <property type="match status" value="2"/>
</dbReference>
<dbReference type="PIRSF" id="PIRSF006485">
    <property type="entry name" value="GTP-binding_EngA"/>
    <property type="match status" value="1"/>
</dbReference>
<dbReference type="PRINTS" id="PR00326">
    <property type="entry name" value="GTP1OBG"/>
</dbReference>
<dbReference type="SUPFAM" id="SSF52540">
    <property type="entry name" value="P-loop containing nucleoside triphosphate hydrolases"/>
    <property type="match status" value="2"/>
</dbReference>
<dbReference type="SUPFAM" id="SSF82653">
    <property type="entry name" value="Probable GTPase Der, C-terminal domain"/>
    <property type="match status" value="1"/>
</dbReference>
<dbReference type="PROSITE" id="PS51712">
    <property type="entry name" value="G_ENGA"/>
    <property type="match status" value="2"/>
</dbReference>
<protein>
    <recommendedName>
        <fullName evidence="1">GTPase Der</fullName>
    </recommendedName>
    <alternativeName>
        <fullName evidence="1">GTP-binding protein EngA</fullName>
    </alternativeName>
</protein>
<proteinExistence type="inferred from homology"/>
<feature type="chain" id="PRO_0000178960" description="GTPase Der">
    <location>
        <begin position="1"/>
        <end position="433"/>
    </location>
</feature>
<feature type="domain" description="EngA-type G 1">
    <location>
        <begin position="3"/>
        <end position="167"/>
    </location>
</feature>
<feature type="domain" description="EngA-type G 2">
    <location>
        <begin position="175"/>
        <end position="347"/>
    </location>
</feature>
<feature type="domain" description="KH-like" evidence="1">
    <location>
        <begin position="348"/>
        <end position="432"/>
    </location>
</feature>
<feature type="binding site" evidence="1">
    <location>
        <begin position="9"/>
        <end position="16"/>
    </location>
    <ligand>
        <name>GTP</name>
        <dbReference type="ChEBI" id="CHEBI:37565"/>
        <label>1</label>
    </ligand>
</feature>
<feature type="binding site" evidence="1">
    <location>
        <begin position="56"/>
        <end position="60"/>
    </location>
    <ligand>
        <name>GTP</name>
        <dbReference type="ChEBI" id="CHEBI:37565"/>
        <label>1</label>
    </ligand>
</feature>
<feature type="binding site" evidence="1">
    <location>
        <begin position="119"/>
        <end position="122"/>
    </location>
    <ligand>
        <name>GTP</name>
        <dbReference type="ChEBI" id="CHEBI:37565"/>
        <label>1</label>
    </ligand>
</feature>
<feature type="binding site" evidence="1">
    <location>
        <begin position="181"/>
        <end position="188"/>
    </location>
    <ligand>
        <name>GTP</name>
        <dbReference type="ChEBI" id="CHEBI:37565"/>
        <label>2</label>
    </ligand>
</feature>
<feature type="binding site" evidence="1">
    <location>
        <begin position="228"/>
        <end position="232"/>
    </location>
    <ligand>
        <name>GTP</name>
        <dbReference type="ChEBI" id="CHEBI:37565"/>
        <label>2</label>
    </ligand>
</feature>
<feature type="binding site" evidence="1">
    <location>
        <begin position="293"/>
        <end position="296"/>
    </location>
    <ligand>
        <name>GTP</name>
        <dbReference type="ChEBI" id="CHEBI:37565"/>
        <label>2</label>
    </ligand>
</feature>
<gene>
    <name evidence="1" type="primary">der</name>
    <name type="synonym">engA</name>
    <name type="synonym">era2</name>
    <name type="ordered locus">aq_1919</name>
</gene>
<evidence type="ECO:0000255" key="1">
    <source>
        <dbReference type="HAMAP-Rule" id="MF_00195"/>
    </source>
</evidence>
<name>DER_AQUAE</name>
<keyword id="KW-0342">GTP-binding</keyword>
<keyword id="KW-0547">Nucleotide-binding</keyword>
<keyword id="KW-1185">Reference proteome</keyword>
<keyword id="KW-0677">Repeat</keyword>
<keyword id="KW-0690">Ribosome biogenesis</keyword>
<organism>
    <name type="scientific">Aquifex aeolicus (strain VF5)</name>
    <dbReference type="NCBI Taxonomy" id="224324"/>
    <lineage>
        <taxon>Bacteria</taxon>
        <taxon>Pseudomonadati</taxon>
        <taxon>Aquificota</taxon>
        <taxon>Aquificia</taxon>
        <taxon>Aquificales</taxon>
        <taxon>Aquificaceae</taxon>
        <taxon>Aquifex</taxon>
    </lineage>
</organism>
<reference key="1">
    <citation type="journal article" date="1998" name="Nature">
        <title>The complete genome of the hyperthermophilic bacterium Aquifex aeolicus.</title>
        <authorList>
            <person name="Deckert G."/>
            <person name="Warren P.V."/>
            <person name="Gaasterland T."/>
            <person name="Young W.G."/>
            <person name="Lenox A.L."/>
            <person name="Graham D.E."/>
            <person name="Overbeek R."/>
            <person name="Snead M.A."/>
            <person name="Keller M."/>
            <person name="Aujay M."/>
            <person name="Huber R."/>
            <person name="Feldman R.A."/>
            <person name="Short J.M."/>
            <person name="Olsen G.J."/>
            <person name="Swanson R.V."/>
        </authorList>
    </citation>
    <scope>NUCLEOTIDE SEQUENCE [LARGE SCALE GENOMIC DNA]</scope>
    <source>
        <strain>VF5</strain>
    </source>
</reference>
<comment type="function">
    <text evidence="1">GTPase that plays an essential role in the late steps of ribosome biogenesis.</text>
</comment>
<comment type="subunit">
    <text evidence="1">Associates with the 50S ribosomal subunit.</text>
</comment>
<comment type="similarity">
    <text evidence="1">Belongs to the TRAFAC class TrmE-Era-EngA-EngB-Septin-like GTPase superfamily. EngA (Der) GTPase family.</text>
</comment>
<accession>O67749</accession>